<proteinExistence type="evidence at protein level"/>
<protein>
    <recommendedName>
        <fullName evidence="1">LPS-assembly lipoprotein LptE</fullName>
    </recommendedName>
</protein>
<organism>
    <name type="scientific">Yersinia pestis</name>
    <dbReference type="NCBI Taxonomy" id="632"/>
    <lineage>
        <taxon>Bacteria</taxon>
        <taxon>Pseudomonadati</taxon>
        <taxon>Pseudomonadota</taxon>
        <taxon>Gammaproteobacteria</taxon>
        <taxon>Enterobacterales</taxon>
        <taxon>Yersiniaceae</taxon>
        <taxon>Yersinia</taxon>
    </lineage>
</organism>
<name>LPTE_YERPE</name>
<keyword id="KW-0002">3D-structure</keyword>
<keyword id="KW-0998">Cell outer membrane</keyword>
<keyword id="KW-0449">Lipoprotein</keyword>
<keyword id="KW-0472">Membrane</keyword>
<keyword id="KW-0564">Palmitate</keyword>
<keyword id="KW-1185">Reference proteome</keyword>
<keyword id="KW-0732">Signal</keyword>
<accession>Q7CJV2</accession>
<accession>Q74W07</accession>
<feature type="signal peptide" evidence="1">
    <location>
        <begin position="1"/>
        <end position="19"/>
    </location>
</feature>
<feature type="chain" id="PRO_0000281191" description="LPS-assembly lipoprotein LptE">
    <location>
        <begin position="20"/>
        <end position="207"/>
    </location>
</feature>
<feature type="region of interest" description="Disordered" evidence="2">
    <location>
        <begin position="168"/>
        <end position="207"/>
    </location>
</feature>
<feature type="compositionally biased region" description="Polar residues" evidence="2">
    <location>
        <begin position="182"/>
        <end position="207"/>
    </location>
</feature>
<feature type="lipid moiety-binding region" description="N-palmitoyl cysteine" evidence="1">
    <location>
        <position position="20"/>
    </location>
</feature>
<feature type="lipid moiety-binding region" description="S-diacylglycerol cysteine" evidence="1">
    <location>
        <position position="20"/>
    </location>
</feature>
<feature type="strand" evidence="3">
    <location>
        <begin position="37"/>
        <end position="43"/>
    </location>
</feature>
<feature type="helix" evidence="3">
    <location>
        <begin position="47"/>
        <end position="58"/>
    </location>
</feature>
<feature type="strand" evidence="3">
    <location>
        <begin position="74"/>
        <end position="89"/>
    </location>
</feature>
<feature type="strand" evidence="3">
    <location>
        <begin position="95"/>
        <end position="109"/>
    </location>
</feature>
<feature type="strand" evidence="3">
    <location>
        <begin position="115"/>
        <end position="127"/>
    </location>
</feature>
<feature type="helix" evidence="3">
    <location>
        <begin position="130"/>
        <end position="132"/>
    </location>
</feature>
<feature type="helix" evidence="3">
    <location>
        <begin position="133"/>
        <end position="163"/>
    </location>
</feature>
<sequence>MRHRILTLLLGLAVLVTAGCGFNLRGTTQVPTELQKLLLESSDPYGPLARSIRQQLRLNNVTIVDDAMRKDIPTLRIIGSSESQETVSIFRNGVAAENQLVLHVQAQVLIPGHDIYPLQVNVFRTFFDNPLTALAKEAEAEVLRQEMREQAAQQLVRQLLTVHAAEVKNTQKNGDKPVSDANAAQGSTPTAVNETTLGEPAVSTSAK</sequence>
<gene>
    <name evidence="1" type="primary">lptE</name>
    <name type="synonym">rlpB</name>
    <name type="ordered locus">YPO2609</name>
    <name type="ordered locus">y1183</name>
    <name type="ordered locus">YP_1104</name>
</gene>
<evidence type="ECO:0000255" key="1">
    <source>
        <dbReference type="HAMAP-Rule" id="MF_01186"/>
    </source>
</evidence>
<evidence type="ECO:0000256" key="2">
    <source>
        <dbReference type="SAM" id="MobiDB-lite"/>
    </source>
</evidence>
<evidence type="ECO:0007829" key="3">
    <source>
        <dbReference type="PDB" id="5IXM"/>
    </source>
</evidence>
<reference key="1">
    <citation type="journal article" date="2001" name="Nature">
        <title>Genome sequence of Yersinia pestis, the causative agent of plague.</title>
        <authorList>
            <person name="Parkhill J."/>
            <person name="Wren B.W."/>
            <person name="Thomson N.R."/>
            <person name="Titball R.W."/>
            <person name="Holden M.T.G."/>
            <person name="Prentice M.B."/>
            <person name="Sebaihia M."/>
            <person name="James K.D."/>
            <person name="Churcher C.M."/>
            <person name="Mungall K.L."/>
            <person name="Baker S."/>
            <person name="Basham D."/>
            <person name="Bentley S.D."/>
            <person name="Brooks K."/>
            <person name="Cerdeno-Tarraga A.-M."/>
            <person name="Chillingworth T."/>
            <person name="Cronin A."/>
            <person name="Davies R.M."/>
            <person name="Davis P."/>
            <person name="Dougan G."/>
            <person name="Feltwell T."/>
            <person name="Hamlin N."/>
            <person name="Holroyd S."/>
            <person name="Jagels K."/>
            <person name="Karlyshev A.V."/>
            <person name="Leather S."/>
            <person name="Moule S."/>
            <person name="Oyston P.C.F."/>
            <person name="Quail M.A."/>
            <person name="Rutherford K.M."/>
            <person name="Simmonds M."/>
            <person name="Skelton J."/>
            <person name="Stevens K."/>
            <person name="Whitehead S."/>
            <person name="Barrell B.G."/>
        </authorList>
    </citation>
    <scope>NUCLEOTIDE SEQUENCE [LARGE SCALE GENOMIC DNA]</scope>
    <source>
        <strain>CO-92 / Biovar Orientalis</strain>
    </source>
</reference>
<reference key="2">
    <citation type="journal article" date="2002" name="J. Bacteriol.">
        <title>Genome sequence of Yersinia pestis KIM.</title>
        <authorList>
            <person name="Deng W."/>
            <person name="Burland V."/>
            <person name="Plunkett G. III"/>
            <person name="Boutin A."/>
            <person name="Mayhew G.F."/>
            <person name="Liss P."/>
            <person name="Perna N.T."/>
            <person name="Rose D.J."/>
            <person name="Mau B."/>
            <person name="Zhou S."/>
            <person name="Schwartz D.C."/>
            <person name="Fetherston J.D."/>
            <person name="Lindler L.E."/>
            <person name="Brubaker R.R."/>
            <person name="Plano G.V."/>
            <person name="Straley S.C."/>
            <person name="McDonough K.A."/>
            <person name="Nilles M.L."/>
            <person name="Matson J.S."/>
            <person name="Blattner F.R."/>
            <person name="Perry R.D."/>
        </authorList>
    </citation>
    <scope>NUCLEOTIDE SEQUENCE [LARGE SCALE GENOMIC DNA]</scope>
    <source>
        <strain>KIM10+ / Biovar Mediaevalis</strain>
    </source>
</reference>
<reference key="3">
    <citation type="journal article" date="2004" name="DNA Res.">
        <title>Complete genome sequence of Yersinia pestis strain 91001, an isolate avirulent to humans.</title>
        <authorList>
            <person name="Song Y."/>
            <person name="Tong Z."/>
            <person name="Wang J."/>
            <person name="Wang L."/>
            <person name="Guo Z."/>
            <person name="Han Y."/>
            <person name="Zhang J."/>
            <person name="Pei D."/>
            <person name="Zhou D."/>
            <person name="Qin H."/>
            <person name="Pang X."/>
            <person name="Han Y."/>
            <person name="Zhai J."/>
            <person name="Li M."/>
            <person name="Cui B."/>
            <person name="Qi Z."/>
            <person name="Jin L."/>
            <person name="Dai R."/>
            <person name="Chen F."/>
            <person name="Li S."/>
            <person name="Ye C."/>
            <person name="Du Z."/>
            <person name="Lin W."/>
            <person name="Wang J."/>
            <person name="Yu J."/>
            <person name="Yang H."/>
            <person name="Wang J."/>
            <person name="Huang P."/>
            <person name="Yang R."/>
        </authorList>
    </citation>
    <scope>NUCLEOTIDE SEQUENCE [LARGE SCALE GENOMIC DNA]</scope>
    <source>
        <strain>91001 / Biovar Mediaevalis</strain>
    </source>
</reference>
<dbReference type="EMBL" id="AL590842">
    <property type="protein sequence ID" value="CAL21232.1"/>
    <property type="molecule type" value="Genomic_DNA"/>
</dbReference>
<dbReference type="EMBL" id="AE009952">
    <property type="protein sequence ID" value="AAM84760.1"/>
    <property type="molecule type" value="Genomic_DNA"/>
</dbReference>
<dbReference type="EMBL" id="AE017042">
    <property type="protein sequence ID" value="AAS61350.1"/>
    <property type="molecule type" value="Genomic_DNA"/>
</dbReference>
<dbReference type="PIR" id="AE0318">
    <property type="entry name" value="AE0318"/>
</dbReference>
<dbReference type="RefSeq" id="WP_002210332.1">
    <property type="nucleotide sequence ID" value="NZ_WUCM01000011.1"/>
</dbReference>
<dbReference type="RefSeq" id="YP_002347565.1">
    <property type="nucleotide sequence ID" value="NC_003143.1"/>
</dbReference>
<dbReference type="PDB" id="5IXM">
    <property type="method" value="X-ray"/>
    <property type="resolution" value="2.75 A"/>
    <property type="chains" value="B/D/F/H=21-207"/>
</dbReference>
<dbReference type="PDBsum" id="5IXM"/>
<dbReference type="SMR" id="Q7CJV2"/>
<dbReference type="DIP" id="DIP-62067N"/>
<dbReference type="IntAct" id="Q7CJV2">
    <property type="interactions" value="1"/>
</dbReference>
<dbReference type="STRING" id="214092.YPO2609"/>
<dbReference type="PaxDb" id="214092-YPO2609"/>
<dbReference type="DNASU" id="1146130"/>
<dbReference type="EnsemblBacteria" id="AAS61350">
    <property type="protein sequence ID" value="AAS61350"/>
    <property type="gene ID" value="YP_1104"/>
</dbReference>
<dbReference type="GeneID" id="57976086"/>
<dbReference type="KEGG" id="ype:YPO2609"/>
<dbReference type="KEGG" id="ypk:y1183"/>
<dbReference type="KEGG" id="ypm:YP_1104"/>
<dbReference type="PATRIC" id="fig|214092.21.peg.3039"/>
<dbReference type="eggNOG" id="COG2980">
    <property type="taxonomic scope" value="Bacteria"/>
</dbReference>
<dbReference type="HOGENOM" id="CLU_103309_1_1_6"/>
<dbReference type="OMA" id="ACGFHFQ"/>
<dbReference type="OrthoDB" id="5801564at2"/>
<dbReference type="Proteomes" id="UP000000815">
    <property type="component" value="Chromosome"/>
</dbReference>
<dbReference type="Proteomes" id="UP000001019">
    <property type="component" value="Chromosome"/>
</dbReference>
<dbReference type="Proteomes" id="UP000002490">
    <property type="component" value="Chromosome"/>
</dbReference>
<dbReference type="GO" id="GO:0009279">
    <property type="term" value="C:cell outer membrane"/>
    <property type="evidence" value="ECO:0000318"/>
    <property type="project" value="GO_Central"/>
</dbReference>
<dbReference type="GO" id="GO:1990351">
    <property type="term" value="C:transporter complex"/>
    <property type="evidence" value="ECO:0000318"/>
    <property type="project" value="GO_Central"/>
</dbReference>
<dbReference type="GO" id="GO:0001530">
    <property type="term" value="F:lipopolysaccharide binding"/>
    <property type="evidence" value="ECO:0000318"/>
    <property type="project" value="GO_Central"/>
</dbReference>
<dbReference type="GO" id="GO:0043165">
    <property type="term" value="P:Gram-negative-bacterium-type cell outer membrane assembly"/>
    <property type="evidence" value="ECO:0000318"/>
    <property type="project" value="GO_Central"/>
</dbReference>
<dbReference type="GO" id="GO:0015920">
    <property type="term" value="P:lipopolysaccharide transport"/>
    <property type="evidence" value="ECO:0000318"/>
    <property type="project" value="GO_Central"/>
</dbReference>
<dbReference type="Gene3D" id="3.30.160.150">
    <property type="entry name" value="Lipoprotein like domain"/>
    <property type="match status" value="1"/>
</dbReference>
<dbReference type="HAMAP" id="MF_01186">
    <property type="entry name" value="LPS_assembly_LptE"/>
    <property type="match status" value="1"/>
</dbReference>
<dbReference type="InterPro" id="IPR007485">
    <property type="entry name" value="LPS_assembly_LptE"/>
</dbReference>
<dbReference type="NCBIfam" id="NF008062">
    <property type="entry name" value="PRK10796.1"/>
    <property type="match status" value="1"/>
</dbReference>
<dbReference type="PANTHER" id="PTHR38098">
    <property type="entry name" value="LPS-ASSEMBLY LIPOPROTEIN LPTE"/>
    <property type="match status" value="1"/>
</dbReference>
<dbReference type="PANTHER" id="PTHR38098:SF1">
    <property type="entry name" value="LPS-ASSEMBLY LIPOPROTEIN LPTE"/>
    <property type="match status" value="1"/>
</dbReference>
<dbReference type="Pfam" id="PF04390">
    <property type="entry name" value="LptE"/>
    <property type="match status" value="1"/>
</dbReference>
<dbReference type="PROSITE" id="PS51257">
    <property type="entry name" value="PROKAR_LIPOPROTEIN"/>
    <property type="match status" value="1"/>
</dbReference>
<comment type="function">
    <text evidence="1">Together with LptD, is involved in the assembly of lipopolysaccharide (LPS) at the surface of the outer membrane. Required for the proper assembly of LptD. Binds LPS and may serve as the LPS recognition site at the outer membrane.</text>
</comment>
<comment type="subunit">
    <text evidence="1">Component of the lipopolysaccharide transport and assembly complex. Interacts with LptD.</text>
</comment>
<comment type="subcellular location">
    <subcellularLocation>
        <location evidence="1">Cell outer membrane</location>
        <topology evidence="1">Lipid-anchor</topology>
    </subcellularLocation>
</comment>
<comment type="similarity">
    <text evidence="1">Belongs to the LptE lipoprotein family.</text>
</comment>